<keyword id="KW-0378">Hydrolase</keyword>
<keyword id="KW-0597">Phosphoprotein</keyword>
<keyword id="KW-0645">Protease</keyword>
<keyword id="KW-1185">Reference proteome</keyword>
<keyword id="KW-0788">Thiol protease</keyword>
<keyword id="KW-0833">Ubl conjugation pathway</keyword>
<reference key="1">
    <citation type="journal article" date="1994" name="Yeast">
        <title>The sequence of a 36 kb segment on the left arm of yeast chromosome X identifies 24 open reading frames including NUC1, PRP21 (SPP91), CDC6, CRY2, the gene for S24, a homologue to the aconitase gene ACO1 and two homologues to chromosome III genes.</title>
        <authorList>
            <person name="Purnelle B."/>
            <person name="Coster F."/>
            <person name="Goffeau A."/>
        </authorList>
    </citation>
    <scope>NUCLEOTIDE SEQUENCE [GENOMIC DNA]</scope>
    <source>
        <strain>ATCC 204508 / S288c</strain>
    </source>
</reference>
<reference key="2">
    <citation type="journal article" date="1996" name="EMBO J.">
        <title>Complete nucleotide sequence of Saccharomyces cerevisiae chromosome X.</title>
        <authorList>
            <person name="Galibert F."/>
            <person name="Alexandraki D."/>
            <person name="Baur A."/>
            <person name="Boles E."/>
            <person name="Chalwatzis N."/>
            <person name="Chuat J.-C."/>
            <person name="Coster F."/>
            <person name="Cziepluch C."/>
            <person name="de Haan M."/>
            <person name="Domdey H."/>
            <person name="Durand P."/>
            <person name="Entian K.-D."/>
            <person name="Gatius M."/>
            <person name="Goffeau A."/>
            <person name="Grivell L.A."/>
            <person name="Hennemann A."/>
            <person name="Herbert C.J."/>
            <person name="Heumann K."/>
            <person name="Hilger F."/>
            <person name="Hollenberg C.P."/>
            <person name="Huang M.-E."/>
            <person name="Jacq C."/>
            <person name="Jauniaux J.-C."/>
            <person name="Katsoulou C."/>
            <person name="Kirchrath L."/>
            <person name="Kleine K."/>
            <person name="Kordes E."/>
            <person name="Koetter P."/>
            <person name="Liebl S."/>
            <person name="Louis E.J."/>
            <person name="Manus V."/>
            <person name="Mewes H.-W."/>
            <person name="Miosga T."/>
            <person name="Obermaier B."/>
            <person name="Perea J."/>
            <person name="Pohl T.M."/>
            <person name="Portetelle D."/>
            <person name="Pujol A."/>
            <person name="Purnelle B."/>
            <person name="Ramezani Rad M."/>
            <person name="Rasmussen S.W."/>
            <person name="Rose M."/>
            <person name="Rossau R."/>
            <person name="Schaaff-Gerstenschlaeger I."/>
            <person name="Smits P.H.M."/>
            <person name="Scarcez T."/>
            <person name="Soriano N."/>
            <person name="To Van D."/>
            <person name="Tzermia M."/>
            <person name="Van Broekhoven A."/>
            <person name="Vandenbol M."/>
            <person name="Wedler H."/>
            <person name="von Wettstein D."/>
            <person name="Wambutt R."/>
            <person name="Zagulski M."/>
            <person name="Zollner A."/>
            <person name="Karpfinger-Hartl L."/>
        </authorList>
    </citation>
    <scope>NUCLEOTIDE SEQUENCE [LARGE SCALE GENOMIC DNA]</scope>
    <source>
        <strain>ATCC 204508 / S288c</strain>
    </source>
</reference>
<reference key="3">
    <citation type="journal article" date="2014" name="G3 (Bethesda)">
        <title>The reference genome sequence of Saccharomyces cerevisiae: Then and now.</title>
        <authorList>
            <person name="Engel S.R."/>
            <person name="Dietrich F.S."/>
            <person name="Fisk D.G."/>
            <person name="Binkley G."/>
            <person name="Balakrishnan R."/>
            <person name="Costanzo M.C."/>
            <person name="Dwight S.S."/>
            <person name="Hitz B.C."/>
            <person name="Karra K."/>
            <person name="Nash R.S."/>
            <person name="Weng S."/>
            <person name="Wong E.D."/>
            <person name="Lloyd P."/>
            <person name="Skrzypek M.S."/>
            <person name="Miyasato S.R."/>
            <person name="Simison M."/>
            <person name="Cherry J.M."/>
        </authorList>
    </citation>
    <scope>GENOME REANNOTATION</scope>
    <source>
        <strain>ATCC 204508 / S288c</strain>
    </source>
</reference>
<reference key="4">
    <citation type="journal article" date="2003" name="Nature">
        <title>Global analysis of protein expression in yeast.</title>
        <authorList>
            <person name="Ghaemmaghami S."/>
            <person name="Huh W.-K."/>
            <person name="Bower K."/>
            <person name="Howson R.W."/>
            <person name="Belle A."/>
            <person name="Dephoure N."/>
            <person name="O'Shea E.K."/>
            <person name="Weissman J.S."/>
        </authorList>
    </citation>
    <scope>LEVEL OF PROTEIN EXPRESSION [LARGE SCALE ANALYSIS]</scope>
</reference>
<reference key="5">
    <citation type="journal article" date="2008" name="Mol. Cell. Proteomics">
        <title>A multidimensional chromatography technology for in-depth phosphoproteome analysis.</title>
        <authorList>
            <person name="Albuquerque C.P."/>
            <person name="Smolka M.B."/>
            <person name="Payne S.H."/>
            <person name="Bafna V."/>
            <person name="Eng J."/>
            <person name="Zhou H."/>
        </authorList>
    </citation>
    <scope>PHOSPHORYLATION [LARGE SCALE ANALYSIS] AT SER-84</scope>
    <scope>IDENTIFICATION BY MASS SPECTROMETRY [LARGE SCALE ANALYSIS]</scope>
</reference>
<reference key="6">
    <citation type="journal article" date="2009" name="Science">
        <title>Global analysis of Cdk1 substrate phosphorylation sites provides insights into evolution.</title>
        <authorList>
            <person name="Holt L.J."/>
            <person name="Tuch B.B."/>
            <person name="Villen J."/>
            <person name="Johnson A.D."/>
            <person name="Gygi S.P."/>
            <person name="Morgan D.O."/>
        </authorList>
    </citation>
    <scope>PHOSPHORYLATION [LARGE SCALE ANALYSIS] AT SER-1160</scope>
    <scope>IDENTIFICATION BY MASS SPECTROMETRY [LARGE SCALE ANALYSIS]</scope>
</reference>
<reference key="7">
    <citation type="journal article" date="2013" name="Mol. Cell">
        <title>Two deubiquitylases act on mitofusin and regulate mitochondrial fusion along independent pathways.</title>
        <authorList>
            <person name="Anton F."/>
            <person name="Dittmar G."/>
            <person name="Langer T."/>
            <person name="Escobar-Henriques M."/>
        </authorList>
    </citation>
    <scope>FUNCTION IN DEUBIQUITINATION OF FZO1</scope>
    <scope>INTERACTION WITH FZO1</scope>
</reference>
<proteinExistence type="evidence at protein level"/>
<feature type="chain" id="PRO_0000080597" description="Ubiquitin carboxyl-terminal hydrolase 12">
    <location>
        <begin position="1"/>
        <end position="1254"/>
    </location>
</feature>
<feature type="domain" description="DUSP" evidence="1">
    <location>
        <begin position="97"/>
        <end position="199"/>
    </location>
</feature>
<feature type="domain" description="USP">
    <location>
        <begin position="364"/>
        <end position="1110"/>
    </location>
</feature>
<feature type="region of interest" description="Disordered" evidence="4">
    <location>
        <begin position="827"/>
        <end position="893"/>
    </location>
</feature>
<feature type="region of interest" description="Disordered" evidence="4">
    <location>
        <begin position="1188"/>
        <end position="1207"/>
    </location>
</feature>
<feature type="compositionally biased region" description="Low complexity" evidence="4">
    <location>
        <begin position="854"/>
        <end position="864"/>
    </location>
</feature>
<feature type="compositionally biased region" description="Acidic residues" evidence="4">
    <location>
        <begin position="867"/>
        <end position="883"/>
    </location>
</feature>
<feature type="compositionally biased region" description="Acidic residues" evidence="4">
    <location>
        <begin position="1189"/>
        <end position="1198"/>
    </location>
</feature>
<feature type="active site" description="Nucleophile" evidence="2 3">
    <location>
        <position position="373"/>
    </location>
</feature>
<feature type="active site" description="Proton acceptor" evidence="2 3">
    <location>
        <position position="1068"/>
    </location>
</feature>
<feature type="modified residue" description="Phosphoserine" evidence="8">
    <location>
        <position position="84"/>
    </location>
</feature>
<feature type="modified residue" description="Phosphoserine" evidence="9">
    <location>
        <position position="1160"/>
    </location>
</feature>
<protein>
    <recommendedName>
        <fullName>Ubiquitin carboxyl-terminal hydrolase 12</fullName>
        <ecNumber>3.4.19.12</ecNumber>
    </recommendedName>
    <alternativeName>
        <fullName>Deubiquitinating enzyme 12</fullName>
    </alternativeName>
    <alternativeName>
        <fullName>Ubiquitin thioesterase 12</fullName>
    </alternativeName>
    <alternativeName>
        <fullName>Ubiquitin-specific-processing protease 12</fullName>
    </alternativeName>
</protein>
<comment type="function">
    <text evidence="6">Ubiquitin carboxyl-terminal hydrolase that recognizes ubiquitin chains that stabilize FZO1 and promote mitochondrial fusion. UBP12 deubiquitylates FZO1 only after oligomerization.</text>
</comment>
<comment type="catalytic activity">
    <reaction>
        <text>Thiol-dependent hydrolysis of ester, thioester, amide, peptide and isopeptide bonds formed by the C-terminal Gly of ubiquitin (a 76-residue protein attached to proteins as an intracellular targeting signal).</text>
        <dbReference type="EC" id="3.4.19.12"/>
    </reaction>
</comment>
<comment type="subunit">
    <text evidence="6">Interacts with FZO1.</text>
</comment>
<comment type="miscellaneous">
    <text evidence="5">Present with 7110 molecules/cell in log phase SD medium.</text>
</comment>
<comment type="similarity">
    <text evidence="7">Belongs to the peptidase C19 family.</text>
</comment>
<name>UBP12_YEAST</name>
<sequence length="1254" mass="143192">MGSSDVSSRECSLVYNEDPDFTDGTTPCDRLGVDLMNVLDDKDEIKQESVPVSDREIEDTESDASAVSSFASANELIAEPHAASETNLGTNGQDGRNVLEQQRDVVARLIEENKETQKEGDKVCIVPKVWYDKFFDPDVTDPEDIGPINTRMICRDFENFVLEDYNRCPYLSIAEPVFNFLSEIYGMTSGSYPVVTNLVINQTTGELETEYNKWFFRLHYLTEKQDGRKRRHGQDDSIMYLSMSALNLVRDLVEKSMNLFFEKADHLDVNAVDFKIWFVSEGSDIATDSNVSTFLNSSYEITPLQFLELPIKKLLIPDMFENRLDKITSNPSDLVIEIKPIEGNHHWPSNYFAYNKLEPASGTTGLVNLGNTCYMNSALQCLVHIPQLRDYFLYDGYEDEINEENPLGYHGYVARAFSDLVQKLFQNRMSIMQRNAAFPPSMFKSTIGHFNSMFSGYMQQDSQEFLAFLLDSLHEDLNRIIKKEYTEKPSLSPGDDVNDWNVVKKLADDTWEMHLKRNCSVITDLFVGMYKSTLYCPECQNVSITFDPYNDVTLPLPVDTVWDKTIKIFPMNSPPLLLEVELSKSSTYMDLKNYVGKMSGLDPNTLFGCEIFSNQIYVNYESTESNAQFLTLQELIKPADDVIFYELPVTNDNEVIVPVLNTRIEKGYKNAMLFGVPFFITLKEDELNNPGAIRMKLQNRFVHLSGGYIPFPEPVGNRTDFADAFPLLVEKYPDVEFEQYKDILQYTSIKVTDKDKSFFSIKILSVEKEQQFASNNRTGPNFWTPISQLNLDKATDIDDKLEDVVKDIYNYSSLVDCAEGVLMQVDDEGDTEGSEAKNFSKPFQSGDDEENKETVTNNENVNNTNDRDEDMELTDDVEEDASTEPELTDKPEALDKIKDSLTSTPFAILSMNDIIVCEWSELGSNEAFSDDKIYNWENPATLPNKELENAKLERSNAKERTITLDDCLQLFSKPEILGLTDSWYCPTCKEHRQATKQIQLWNTPDILLIHLKRFESQRSFSDKIDATVNFPITDLDLSRYVVYKDDPRGLIYDLYAVDNHYGGLGGGHYTAYVKNFADNKWYYFDDSRVTETAPENSIAGSAYLLFYIRRHKDGNGLGSSKLQEIIQKSRHGYDERIKKIYDEQMKLYEFNKTDEEEDVSDDMIECNEDVQAPEYSNRSLEVGHIETQDCNDEDDNDDGERTNSGRRKLRLLKKVYKNNSGLGSSSTSEISEGCPENEVADLNLKNGVTLESPE</sequence>
<accession>P39538</accession>
<accession>D6VVZ5</accession>
<evidence type="ECO:0000255" key="1">
    <source>
        <dbReference type="PROSITE-ProRule" id="PRU00613"/>
    </source>
</evidence>
<evidence type="ECO:0000255" key="2">
    <source>
        <dbReference type="PROSITE-ProRule" id="PRU10092"/>
    </source>
</evidence>
<evidence type="ECO:0000255" key="3">
    <source>
        <dbReference type="PROSITE-ProRule" id="PRU10093"/>
    </source>
</evidence>
<evidence type="ECO:0000256" key="4">
    <source>
        <dbReference type="SAM" id="MobiDB-lite"/>
    </source>
</evidence>
<evidence type="ECO:0000269" key="5">
    <source>
    </source>
</evidence>
<evidence type="ECO:0000269" key="6">
    <source>
    </source>
</evidence>
<evidence type="ECO:0000305" key="7"/>
<evidence type="ECO:0007744" key="8">
    <source>
    </source>
</evidence>
<evidence type="ECO:0007744" key="9">
    <source>
    </source>
</evidence>
<organism>
    <name type="scientific">Saccharomyces cerevisiae (strain ATCC 204508 / S288c)</name>
    <name type="common">Baker's yeast</name>
    <dbReference type="NCBI Taxonomy" id="559292"/>
    <lineage>
        <taxon>Eukaryota</taxon>
        <taxon>Fungi</taxon>
        <taxon>Dikarya</taxon>
        <taxon>Ascomycota</taxon>
        <taxon>Saccharomycotina</taxon>
        <taxon>Saccharomycetes</taxon>
        <taxon>Saccharomycetales</taxon>
        <taxon>Saccharomycetaceae</taxon>
        <taxon>Saccharomyces</taxon>
    </lineage>
</organism>
<dbReference type="EC" id="3.4.19.12"/>
<dbReference type="EMBL" id="X77688">
    <property type="protein sequence ID" value="CAA54762.1"/>
    <property type="molecule type" value="Genomic_DNA"/>
</dbReference>
<dbReference type="EMBL" id="Z49472">
    <property type="protein sequence ID" value="CAA89492.1"/>
    <property type="molecule type" value="Genomic_DNA"/>
</dbReference>
<dbReference type="EMBL" id="BK006943">
    <property type="protein sequence ID" value="DAA08611.1"/>
    <property type="molecule type" value="Genomic_DNA"/>
</dbReference>
<dbReference type="PIR" id="S46636">
    <property type="entry name" value="S46636"/>
</dbReference>
<dbReference type="RefSeq" id="NP_012338.1">
    <property type="nucleotide sequence ID" value="NM_001181630.1"/>
</dbReference>
<dbReference type="BioGRID" id="33567">
    <property type="interactions" value="162"/>
</dbReference>
<dbReference type="DIP" id="DIP-6312N"/>
<dbReference type="FunCoup" id="P39538">
    <property type="interactions" value="983"/>
</dbReference>
<dbReference type="IntAct" id="P39538">
    <property type="interactions" value="8"/>
</dbReference>
<dbReference type="MINT" id="P39538"/>
<dbReference type="STRING" id="4932.YJL197W"/>
<dbReference type="MEROPS" id="C19.103"/>
<dbReference type="iPTMnet" id="P39538"/>
<dbReference type="PaxDb" id="4932-YJL197W"/>
<dbReference type="PeptideAtlas" id="P39538"/>
<dbReference type="EnsemblFungi" id="YJL197W_mRNA">
    <property type="protein sequence ID" value="YJL197W"/>
    <property type="gene ID" value="YJL197W"/>
</dbReference>
<dbReference type="GeneID" id="853242"/>
<dbReference type="KEGG" id="sce:YJL197W"/>
<dbReference type="AGR" id="SGD:S000003733"/>
<dbReference type="SGD" id="S000003733">
    <property type="gene designation" value="UBP12"/>
</dbReference>
<dbReference type="VEuPathDB" id="FungiDB:YJL197W"/>
<dbReference type="eggNOG" id="KOG1870">
    <property type="taxonomic scope" value="Eukaryota"/>
</dbReference>
<dbReference type="HOGENOM" id="CLU_001060_7_1_1"/>
<dbReference type="InParanoid" id="P39538"/>
<dbReference type="OMA" id="PYCEKPE"/>
<dbReference type="OrthoDB" id="292964at2759"/>
<dbReference type="BioCyc" id="YEAST:G3O-31628-MONOMER"/>
<dbReference type="BioGRID-ORCS" id="853242">
    <property type="hits" value="0 hits in 10 CRISPR screens"/>
</dbReference>
<dbReference type="PRO" id="PR:P39538"/>
<dbReference type="Proteomes" id="UP000002311">
    <property type="component" value="Chromosome X"/>
</dbReference>
<dbReference type="RNAct" id="P39538">
    <property type="molecule type" value="protein"/>
</dbReference>
<dbReference type="GO" id="GO:0005737">
    <property type="term" value="C:cytoplasm"/>
    <property type="evidence" value="ECO:0007005"/>
    <property type="project" value="SGD"/>
</dbReference>
<dbReference type="GO" id="GO:0043596">
    <property type="term" value="C:nuclear replication fork"/>
    <property type="evidence" value="ECO:0000314"/>
    <property type="project" value="SGD"/>
</dbReference>
<dbReference type="GO" id="GO:0005634">
    <property type="term" value="C:nucleus"/>
    <property type="evidence" value="ECO:0007005"/>
    <property type="project" value="SGD"/>
</dbReference>
<dbReference type="GO" id="GO:0004843">
    <property type="term" value="F:cysteine-type deubiquitinase activity"/>
    <property type="evidence" value="ECO:0000314"/>
    <property type="project" value="SGD"/>
</dbReference>
<dbReference type="GO" id="GO:0006974">
    <property type="term" value="P:DNA damage response"/>
    <property type="evidence" value="ECO:0000316"/>
    <property type="project" value="SGD"/>
</dbReference>
<dbReference type="GO" id="GO:0010637">
    <property type="term" value="P:negative regulation of mitochondrial fusion"/>
    <property type="evidence" value="ECO:0000315"/>
    <property type="project" value="SGD"/>
</dbReference>
<dbReference type="GO" id="GO:0016579">
    <property type="term" value="P:protein deubiquitination"/>
    <property type="evidence" value="ECO:0000315"/>
    <property type="project" value="SGD"/>
</dbReference>
<dbReference type="GO" id="GO:0006508">
    <property type="term" value="P:proteolysis"/>
    <property type="evidence" value="ECO:0007669"/>
    <property type="project" value="UniProtKB-KW"/>
</dbReference>
<dbReference type="CDD" id="cd02674">
    <property type="entry name" value="Peptidase_C19R"/>
    <property type="match status" value="1"/>
</dbReference>
<dbReference type="FunFam" id="3.30.2230.10:FF:000011">
    <property type="entry name" value="Ubiquitin carboxyl-terminal hydrolase"/>
    <property type="match status" value="1"/>
</dbReference>
<dbReference type="FunFam" id="3.90.70.10:FF:000180">
    <property type="entry name" value="Ubiquitin carboxyl-terminal hydrolase"/>
    <property type="match status" value="1"/>
</dbReference>
<dbReference type="FunFam" id="3.90.70.10:FF:000203">
    <property type="entry name" value="Ubiquitin carboxyl-terminal hydrolase"/>
    <property type="match status" value="1"/>
</dbReference>
<dbReference type="Gene3D" id="3.90.70.10">
    <property type="entry name" value="Cysteine proteinases"/>
    <property type="match status" value="2"/>
</dbReference>
<dbReference type="Gene3D" id="3.30.2230.10">
    <property type="entry name" value="DUSP-like"/>
    <property type="match status" value="1"/>
</dbReference>
<dbReference type="InterPro" id="IPR035927">
    <property type="entry name" value="DUSP-like_sf"/>
</dbReference>
<dbReference type="InterPro" id="IPR038765">
    <property type="entry name" value="Papain-like_cys_pep_sf"/>
</dbReference>
<dbReference type="InterPro" id="IPR006615">
    <property type="entry name" value="Pept_C19_DUSP"/>
</dbReference>
<dbReference type="InterPro" id="IPR001394">
    <property type="entry name" value="Peptidase_C19_UCH"/>
</dbReference>
<dbReference type="InterPro" id="IPR050185">
    <property type="entry name" value="Ub_carboxyl-term_hydrolase"/>
</dbReference>
<dbReference type="InterPro" id="IPR018200">
    <property type="entry name" value="USP_CS"/>
</dbReference>
<dbReference type="InterPro" id="IPR028889">
    <property type="entry name" value="USP_dom"/>
</dbReference>
<dbReference type="PANTHER" id="PTHR21646">
    <property type="entry name" value="UBIQUITIN CARBOXYL-TERMINAL HYDROLASE"/>
    <property type="match status" value="1"/>
</dbReference>
<dbReference type="PANTHER" id="PTHR21646:SF24">
    <property type="entry name" value="UBIQUITIN CARBOXYL-TERMINAL HYDROLASE"/>
    <property type="match status" value="1"/>
</dbReference>
<dbReference type="Pfam" id="PF06337">
    <property type="entry name" value="DUSP"/>
    <property type="match status" value="1"/>
</dbReference>
<dbReference type="Pfam" id="PF00443">
    <property type="entry name" value="UCH"/>
    <property type="match status" value="1"/>
</dbReference>
<dbReference type="SMART" id="SM00695">
    <property type="entry name" value="DUSP"/>
    <property type="match status" value="1"/>
</dbReference>
<dbReference type="SUPFAM" id="SSF54001">
    <property type="entry name" value="Cysteine proteinases"/>
    <property type="match status" value="1"/>
</dbReference>
<dbReference type="SUPFAM" id="SSF143791">
    <property type="entry name" value="DUSP-like"/>
    <property type="match status" value="1"/>
</dbReference>
<dbReference type="PROSITE" id="PS51283">
    <property type="entry name" value="DUSP"/>
    <property type="match status" value="1"/>
</dbReference>
<dbReference type="PROSITE" id="PS00972">
    <property type="entry name" value="USP_1"/>
    <property type="match status" value="1"/>
</dbReference>
<dbReference type="PROSITE" id="PS00973">
    <property type="entry name" value="USP_2"/>
    <property type="match status" value="1"/>
</dbReference>
<dbReference type="PROSITE" id="PS50235">
    <property type="entry name" value="USP_3"/>
    <property type="match status" value="1"/>
</dbReference>
<gene>
    <name type="primary">UBP12</name>
    <name type="ordered locus">YJL197W</name>
    <name type="ORF">J0340</name>
</gene>